<evidence type="ECO:0000250" key="1"/>
<evidence type="ECO:0000305" key="2"/>
<protein>
    <recommendedName>
        <fullName>Dihydroorotate dehydrogenase B (NAD(+)), catalytic subunit</fullName>
        <shortName>DHOD B</shortName>
        <shortName>DHODase B</shortName>
        <shortName>DHOdehase B</shortName>
        <ecNumber>1.3.1.14</ecNumber>
    </recommendedName>
    <alternativeName>
        <fullName>Dihydroorotate oxidase B</fullName>
    </alternativeName>
    <alternativeName>
        <fullName>Orotate reductase (NADH)</fullName>
    </alternativeName>
</protein>
<gene>
    <name type="primary">pyrD</name>
    <name type="ordered locus">GSU1755</name>
</gene>
<organism>
    <name type="scientific">Geobacter sulfurreducens (strain ATCC 51573 / DSM 12127 / PCA)</name>
    <dbReference type="NCBI Taxonomy" id="243231"/>
    <lineage>
        <taxon>Bacteria</taxon>
        <taxon>Pseudomonadati</taxon>
        <taxon>Thermodesulfobacteriota</taxon>
        <taxon>Desulfuromonadia</taxon>
        <taxon>Geobacterales</taxon>
        <taxon>Geobacteraceae</taxon>
        <taxon>Geobacter</taxon>
    </lineage>
</organism>
<sequence length="305" mass="32068">MQKPDLSVEIAGITLRNPVMTASGTFGYGEEFSEYVNLEAIGAIITKGLSLKPKAGNPTPRIVETTGGMLNAIGLQNVGIDAFVEKKVPFLRTVATPVIVNFFGNTLEEYAELAERLDLIPEVAAVEINISCPNVKHGGIVFGTDPKAAYSVVKAVREATIKPVIVKLSPNVTDIVEMAWACADAEADALSLINTLTGMAIDLDKRRPILANVTGGLSGPAVKPIALRMVWQVARAVKIPVIGIGGIMTGIDALEFMLAGATAVQVGTANFLDPGAAGRIAAEMERYLADNGIADVKEMIGALEV</sequence>
<proteinExistence type="inferred from homology"/>
<feature type="chain" id="PRO_0000336445" description="Dihydroorotate dehydrogenase B (NAD(+)), catalytic subunit">
    <location>
        <begin position="1"/>
        <end position="305"/>
    </location>
</feature>
<feature type="active site" description="Nucleophile">
    <location>
        <position position="132"/>
    </location>
</feature>
<feature type="binding site" evidence="1">
    <location>
        <position position="23"/>
    </location>
    <ligand>
        <name>FMN</name>
        <dbReference type="ChEBI" id="CHEBI:58210"/>
    </ligand>
</feature>
<feature type="binding site" evidence="1">
    <location>
        <begin position="47"/>
        <end position="48"/>
    </location>
    <ligand>
        <name>FMN</name>
        <dbReference type="ChEBI" id="CHEBI:58210"/>
    </ligand>
</feature>
<feature type="binding site" evidence="1">
    <location>
        <position position="47"/>
    </location>
    <ligand>
        <name>substrate</name>
    </ligand>
</feature>
<feature type="binding site" evidence="1">
    <location>
        <begin position="71"/>
        <end position="75"/>
    </location>
    <ligand>
        <name>substrate</name>
    </ligand>
</feature>
<feature type="binding site" evidence="1">
    <location>
        <position position="101"/>
    </location>
    <ligand>
        <name>FMN</name>
        <dbReference type="ChEBI" id="CHEBI:58210"/>
    </ligand>
</feature>
<feature type="binding site" evidence="1">
    <location>
        <position position="129"/>
    </location>
    <ligand>
        <name>FMN</name>
        <dbReference type="ChEBI" id="CHEBI:58210"/>
    </ligand>
</feature>
<feature type="binding site" evidence="1">
    <location>
        <position position="129"/>
    </location>
    <ligand>
        <name>substrate</name>
    </ligand>
</feature>
<feature type="binding site" evidence="1">
    <location>
        <position position="167"/>
    </location>
    <ligand>
        <name>FMN</name>
        <dbReference type="ChEBI" id="CHEBI:58210"/>
    </ligand>
</feature>
<feature type="binding site" evidence="1">
    <location>
        <position position="193"/>
    </location>
    <ligand>
        <name>FMN</name>
        <dbReference type="ChEBI" id="CHEBI:58210"/>
    </ligand>
</feature>
<feature type="binding site" evidence="1">
    <location>
        <begin position="194"/>
        <end position="195"/>
    </location>
    <ligand>
        <name>substrate</name>
    </ligand>
</feature>
<feature type="binding site" evidence="1">
    <location>
        <position position="219"/>
    </location>
    <ligand>
        <name>FMN</name>
        <dbReference type="ChEBI" id="CHEBI:58210"/>
    </ligand>
</feature>
<feature type="binding site" evidence="1">
    <location>
        <begin position="245"/>
        <end position="246"/>
    </location>
    <ligand>
        <name>FMN</name>
        <dbReference type="ChEBI" id="CHEBI:58210"/>
    </ligand>
</feature>
<feature type="binding site" evidence="1">
    <location>
        <begin position="267"/>
        <end position="268"/>
    </location>
    <ligand>
        <name>FMN</name>
        <dbReference type="ChEBI" id="CHEBI:58210"/>
    </ligand>
</feature>
<name>PYRDB_GEOSL</name>
<comment type="function">
    <text evidence="1">Catalyzes the conversion of dihydroorotate to orotate with NAD(+) as electron acceptor.</text>
</comment>
<comment type="catalytic activity">
    <reaction>
        <text>(S)-dihydroorotate + NAD(+) = orotate + NADH + H(+)</text>
        <dbReference type="Rhea" id="RHEA:13513"/>
        <dbReference type="ChEBI" id="CHEBI:15378"/>
        <dbReference type="ChEBI" id="CHEBI:30839"/>
        <dbReference type="ChEBI" id="CHEBI:30864"/>
        <dbReference type="ChEBI" id="CHEBI:57540"/>
        <dbReference type="ChEBI" id="CHEBI:57945"/>
        <dbReference type="EC" id="1.3.1.14"/>
    </reaction>
</comment>
<comment type="cofactor">
    <cofactor evidence="1">
        <name>FMN</name>
        <dbReference type="ChEBI" id="CHEBI:58210"/>
    </cofactor>
    <text evidence="1">Binds 1 FMN per subunit.</text>
</comment>
<comment type="pathway">
    <text>Pyrimidine metabolism; UMP biosynthesis via de novo pathway; orotate from (S)-dihydroorotate (NAD(+) route): step 1/1.</text>
</comment>
<comment type="subunit">
    <text evidence="1">Heterotetramer of 2 PyrK and 2 PyrD type B subunits.</text>
</comment>
<comment type="subcellular location">
    <subcellularLocation>
        <location evidence="1">Cytoplasm</location>
    </subcellularLocation>
</comment>
<comment type="similarity">
    <text evidence="2">Belongs to the dihydroorotate dehydrogenase family. Type 1 subfamily.</text>
</comment>
<accession>Q74CB9</accession>
<reference key="1">
    <citation type="journal article" date="2003" name="Science">
        <title>Genome of Geobacter sulfurreducens: metal reduction in subsurface environments.</title>
        <authorList>
            <person name="Methe B.A."/>
            <person name="Nelson K.E."/>
            <person name="Eisen J.A."/>
            <person name="Paulsen I.T."/>
            <person name="Nelson W.C."/>
            <person name="Heidelberg J.F."/>
            <person name="Wu D."/>
            <person name="Wu M."/>
            <person name="Ward N.L."/>
            <person name="Beanan M.J."/>
            <person name="Dodson R.J."/>
            <person name="Madupu R."/>
            <person name="Brinkac L.M."/>
            <person name="Daugherty S.C."/>
            <person name="DeBoy R.T."/>
            <person name="Durkin A.S."/>
            <person name="Gwinn M.L."/>
            <person name="Kolonay J.F."/>
            <person name="Sullivan S.A."/>
            <person name="Haft D.H."/>
            <person name="Selengut J."/>
            <person name="Davidsen T.M."/>
            <person name="Zafar N."/>
            <person name="White O."/>
            <person name="Tran B."/>
            <person name="Romero C."/>
            <person name="Forberger H.A."/>
            <person name="Weidman J.F."/>
            <person name="Khouri H.M."/>
            <person name="Feldblyum T.V."/>
            <person name="Utterback T.R."/>
            <person name="Van Aken S.E."/>
            <person name="Lovley D.R."/>
            <person name="Fraser C.M."/>
        </authorList>
    </citation>
    <scope>NUCLEOTIDE SEQUENCE [LARGE SCALE GENOMIC DNA]</scope>
    <source>
        <strain>ATCC 51573 / DSM 12127 / PCA</strain>
    </source>
</reference>
<dbReference type="EC" id="1.3.1.14"/>
<dbReference type="EMBL" id="AE017180">
    <property type="protein sequence ID" value="AAR35132.1"/>
    <property type="molecule type" value="Genomic_DNA"/>
</dbReference>
<dbReference type="RefSeq" id="NP_952805.1">
    <property type="nucleotide sequence ID" value="NC_002939.5"/>
</dbReference>
<dbReference type="RefSeq" id="WP_010942399.1">
    <property type="nucleotide sequence ID" value="NC_002939.5"/>
</dbReference>
<dbReference type="SMR" id="Q74CB9"/>
<dbReference type="FunCoup" id="Q74CB9">
    <property type="interactions" value="247"/>
</dbReference>
<dbReference type="STRING" id="243231.GSU1755"/>
<dbReference type="EnsemblBacteria" id="AAR35132">
    <property type="protein sequence ID" value="AAR35132"/>
    <property type="gene ID" value="GSU1755"/>
</dbReference>
<dbReference type="KEGG" id="gsu:GSU1755"/>
<dbReference type="PATRIC" id="fig|243231.5.peg.1795"/>
<dbReference type="eggNOG" id="COG0167">
    <property type="taxonomic scope" value="Bacteria"/>
</dbReference>
<dbReference type="HOGENOM" id="CLU_042042_0_0_7"/>
<dbReference type="InParanoid" id="Q74CB9"/>
<dbReference type="OrthoDB" id="9802377at2"/>
<dbReference type="UniPathway" id="UPA00070">
    <property type="reaction ID" value="UER00945"/>
</dbReference>
<dbReference type="Proteomes" id="UP000000577">
    <property type="component" value="Chromosome"/>
</dbReference>
<dbReference type="GO" id="GO:0005737">
    <property type="term" value="C:cytoplasm"/>
    <property type="evidence" value="ECO:0000318"/>
    <property type="project" value="GO_Central"/>
</dbReference>
<dbReference type="GO" id="GO:0004589">
    <property type="term" value="F:dihydroorotate dehydrogenase (NAD+) activity"/>
    <property type="evidence" value="ECO:0007669"/>
    <property type="project" value="UniProtKB-EC"/>
</dbReference>
<dbReference type="GO" id="GO:0004152">
    <property type="term" value="F:dihydroorotate dehydrogenase activity"/>
    <property type="evidence" value="ECO:0000318"/>
    <property type="project" value="GO_Central"/>
</dbReference>
<dbReference type="GO" id="GO:0006207">
    <property type="term" value="P:'de novo' pyrimidine nucleobase biosynthetic process"/>
    <property type="evidence" value="ECO:0000318"/>
    <property type="project" value="GO_Central"/>
</dbReference>
<dbReference type="GO" id="GO:0044205">
    <property type="term" value="P:'de novo' UMP biosynthetic process"/>
    <property type="evidence" value="ECO:0007669"/>
    <property type="project" value="UniProtKB-UniRule"/>
</dbReference>
<dbReference type="CDD" id="cd04740">
    <property type="entry name" value="DHOD_1B_like"/>
    <property type="match status" value="1"/>
</dbReference>
<dbReference type="FunFam" id="3.20.20.70:FF:000069">
    <property type="entry name" value="Dihydroorotate dehydrogenase"/>
    <property type="match status" value="1"/>
</dbReference>
<dbReference type="Gene3D" id="3.20.20.70">
    <property type="entry name" value="Aldolase class I"/>
    <property type="match status" value="1"/>
</dbReference>
<dbReference type="HAMAP" id="MF_00224">
    <property type="entry name" value="DHO_dh_type1"/>
    <property type="match status" value="1"/>
</dbReference>
<dbReference type="InterPro" id="IPR013785">
    <property type="entry name" value="Aldolase_TIM"/>
</dbReference>
<dbReference type="InterPro" id="IPR050074">
    <property type="entry name" value="DHO_dehydrogenase"/>
</dbReference>
<dbReference type="InterPro" id="IPR033888">
    <property type="entry name" value="DHOD_1B"/>
</dbReference>
<dbReference type="InterPro" id="IPR024920">
    <property type="entry name" value="Dihydroorotate_DH_1"/>
</dbReference>
<dbReference type="InterPro" id="IPR012135">
    <property type="entry name" value="Dihydroorotate_DH_1_2"/>
</dbReference>
<dbReference type="InterPro" id="IPR005720">
    <property type="entry name" value="Dihydroorotate_DH_cat"/>
</dbReference>
<dbReference type="InterPro" id="IPR001295">
    <property type="entry name" value="Dihydroorotate_DH_CS"/>
</dbReference>
<dbReference type="InterPro" id="IPR049622">
    <property type="entry name" value="Dihydroorotate_DH_I"/>
</dbReference>
<dbReference type="NCBIfam" id="NF005574">
    <property type="entry name" value="PRK07259.1"/>
    <property type="match status" value="1"/>
</dbReference>
<dbReference type="NCBIfam" id="TIGR01037">
    <property type="entry name" value="pyrD_sub1_fam"/>
    <property type="match status" value="1"/>
</dbReference>
<dbReference type="PANTHER" id="PTHR48109:SF1">
    <property type="entry name" value="DIHYDROOROTATE DEHYDROGENASE (FUMARATE)"/>
    <property type="match status" value="1"/>
</dbReference>
<dbReference type="PANTHER" id="PTHR48109">
    <property type="entry name" value="DIHYDROOROTATE DEHYDROGENASE (QUINONE), MITOCHONDRIAL-RELATED"/>
    <property type="match status" value="1"/>
</dbReference>
<dbReference type="Pfam" id="PF01180">
    <property type="entry name" value="DHO_dh"/>
    <property type="match status" value="1"/>
</dbReference>
<dbReference type="PIRSF" id="PIRSF000164">
    <property type="entry name" value="DHO_oxidase"/>
    <property type="match status" value="1"/>
</dbReference>
<dbReference type="SUPFAM" id="SSF51395">
    <property type="entry name" value="FMN-linked oxidoreductases"/>
    <property type="match status" value="1"/>
</dbReference>
<dbReference type="PROSITE" id="PS00911">
    <property type="entry name" value="DHODEHASE_1"/>
    <property type="match status" value="1"/>
</dbReference>
<dbReference type="PROSITE" id="PS00912">
    <property type="entry name" value="DHODEHASE_2"/>
    <property type="match status" value="1"/>
</dbReference>
<keyword id="KW-0963">Cytoplasm</keyword>
<keyword id="KW-0285">Flavoprotein</keyword>
<keyword id="KW-0288">FMN</keyword>
<keyword id="KW-0520">NAD</keyword>
<keyword id="KW-0560">Oxidoreductase</keyword>
<keyword id="KW-0665">Pyrimidine biosynthesis</keyword>
<keyword id="KW-1185">Reference proteome</keyword>